<reference key="1">
    <citation type="journal article" date="1983" name="Nucleic Acids Res.">
        <title>Cloning and structural analyses of hepatitis B virus DNAs, subtype adr.</title>
        <authorList>
            <person name="Fujiyama A."/>
            <person name="Miyanohara A."/>
            <person name="Nozaki C."/>
            <person name="Yoneyama T."/>
            <person name="Ohtomo N."/>
            <person name="Matsubara K."/>
        </authorList>
    </citation>
    <scope>NUCLEOTIDE SEQUENCE [GENOMIC DNA]</scope>
</reference>
<accession>P0C6H5</accession>
<feature type="signal peptide" evidence="2">
    <location>
        <begin position="1"/>
        <end position="19"/>
    </location>
</feature>
<feature type="chain" id="PRO_0000324718" description="External core antigen" evidence="2">
    <location>
        <begin position="20"/>
        <end position="212"/>
    </location>
</feature>
<feature type="propeptide" id="PRO_0000324719" evidence="1">
    <location>
        <begin position="184"/>
        <end position="212"/>
    </location>
</feature>
<feature type="repeat" description="1; half-length">
    <location>
        <begin position="184"/>
        <end position="190"/>
    </location>
</feature>
<feature type="repeat" description="2">
    <location>
        <begin position="191"/>
        <end position="198"/>
    </location>
</feature>
<feature type="repeat" description="3">
    <location>
        <begin position="199"/>
        <end position="206"/>
    </location>
</feature>
<feature type="region of interest" description="HBEAG" evidence="2">
    <location>
        <begin position="25"/>
        <end position="27"/>
    </location>
</feature>
<feature type="region of interest" description="Disordered" evidence="3">
    <location>
        <begin position="165"/>
        <end position="212"/>
    </location>
</feature>
<feature type="region of interest" description="3 X 8 AA repeats of S-P-R-R-R-R-S-Q">
    <location>
        <begin position="184"/>
        <end position="206"/>
    </location>
</feature>
<feature type="compositionally biased region" description="Basic residues" evidence="3">
    <location>
        <begin position="178"/>
        <end position="205"/>
    </location>
</feature>
<feature type="site" description="Cleavage; by host" evidence="2">
    <location>
        <begin position="183"/>
        <end position="184"/>
    </location>
</feature>
<feature type="disulfide bond" description="Interchain" evidence="2">
    <location>
        <position position="77"/>
    </location>
</feature>
<feature type="disulfide bond" description="Interchain" evidence="2">
    <location>
        <position position="90"/>
    </location>
</feature>
<evidence type="ECO:0000250" key="1"/>
<evidence type="ECO:0000255" key="2">
    <source>
        <dbReference type="HAMAP-Rule" id="MF_04076"/>
    </source>
</evidence>
<evidence type="ECO:0000256" key="3">
    <source>
        <dbReference type="SAM" id="MobiDB-lite"/>
    </source>
</evidence>
<keyword id="KW-0024">Alternative initiation</keyword>
<keyword id="KW-1015">Disulfide bond</keyword>
<keyword id="KW-1048">Host nucleus</keyword>
<keyword id="KW-0945">Host-virus interaction</keyword>
<keyword id="KW-0677">Repeat</keyword>
<keyword id="KW-0964">Secreted</keyword>
<keyword id="KW-0732">Signal</keyword>
<keyword id="KW-0899">Viral immunoevasion</keyword>
<proteinExistence type="inferred from homology"/>
<sequence>MQLFHLCLIISCSCPTVQASKLCLGWLWGMDIDPYKEFGASVELLSFLPSDFFPSIRDLLDTASALYREALESPEHCSPHHTALRQAILCWGELMNLATWVGSNLEDPASRELVVSYVNVNMGLKIRQLLWFHISCLTFGRETVLEYLVSFGVWIRTPPAYRPPNAPILSTLPETTVVRRRGRSPRRRTPSPRRRRSQSPRRRRSQSRESQC</sequence>
<dbReference type="EMBL" id="X01587">
    <property type="status" value="NOT_ANNOTATED_CDS"/>
    <property type="molecule type" value="Genomic_DNA"/>
</dbReference>
<dbReference type="SMR" id="P0C6H5"/>
<dbReference type="Proteomes" id="UP000007923">
    <property type="component" value="Genome"/>
</dbReference>
<dbReference type="GO" id="GO:0005576">
    <property type="term" value="C:extracellular region"/>
    <property type="evidence" value="ECO:0007669"/>
    <property type="project" value="UniProtKB-SubCell"/>
</dbReference>
<dbReference type="GO" id="GO:0043657">
    <property type="term" value="C:host cell"/>
    <property type="evidence" value="ECO:0007669"/>
    <property type="project" value="GOC"/>
</dbReference>
<dbReference type="GO" id="GO:0030430">
    <property type="term" value="C:host cell cytoplasm"/>
    <property type="evidence" value="ECO:0007669"/>
    <property type="project" value="UniProtKB-UniRule"/>
</dbReference>
<dbReference type="GO" id="GO:0042025">
    <property type="term" value="C:host cell nucleus"/>
    <property type="evidence" value="ECO:0007669"/>
    <property type="project" value="UniProtKB-SubCell"/>
</dbReference>
<dbReference type="GO" id="GO:0039619">
    <property type="term" value="C:T=4 icosahedral viral capsid"/>
    <property type="evidence" value="ECO:0007669"/>
    <property type="project" value="UniProtKB-UniRule"/>
</dbReference>
<dbReference type="GO" id="GO:0003677">
    <property type="term" value="F:DNA binding"/>
    <property type="evidence" value="ECO:0007669"/>
    <property type="project" value="UniProtKB-UniRule"/>
</dbReference>
<dbReference type="GO" id="GO:0003723">
    <property type="term" value="F:RNA binding"/>
    <property type="evidence" value="ECO:0007669"/>
    <property type="project" value="UniProtKB-UniRule"/>
</dbReference>
<dbReference type="GO" id="GO:0005198">
    <property type="term" value="F:structural molecule activity"/>
    <property type="evidence" value="ECO:0007669"/>
    <property type="project" value="UniProtKB-UniRule"/>
</dbReference>
<dbReference type="GO" id="GO:0075521">
    <property type="term" value="P:microtubule-dependent intracellular transport of viral material towards nucleus"/>
    <property type="evidence" value="ECO:0007669"/>
    <property type="project" value="UniProtKB-UniRule"/>
</dbReference>
<dbReference type="GO" id="GO:0046718">
    <property type="term" value="P:symbiont entry into host cell"/>
    <property type="evidence" value="ECO:0007669"/>
    <property type="project" value="UniProtKB-UniRule"/>
</dbReference>
<dbReference type="GO" id="GO:0075732">
    <property type="term" value="P:viral penetration into host nucleus"/>
    <property type="evidence" value="ECO:0007669"/>
    <property type="project" value="UniProtKB-UniRule"/>
</dbReference>
<dbReference type="FunFam" id="1.10.4090.10:FF:000001">
    <property type="entry name" value="Capsid protein"/>
    <property type="match status" value="1"/>
</dbReference>
<dbReference type="Gene3D" id="1.10.4090.10">
    <property type="entry name" value="Viral capsid, core domain supefamily, Hepatitis B virus"/>
    <property type="match status" value="1"/>
</dbReference>
<dbReference type="HAMAP" id="MF_04076">
    <property type="entry name" value="HBV_HBEAG"/>
    <property type="match status" value="1"/>
</dbReference>
<dbReference type="InterPro" id="IPR013195">
    <property type="entry name" value="Hepatitis_B_virus_capsid_N"/>
</dbReference>
<dbReference type="InterPro" id="IPR002006">
    <property type="entry name" value="Hepatitis_core"/>
</dbReference>
<dbReference type="InterPro" id="IPR036459">
    <property type="entry name" value="Viral_capsid_core_dom_sf_HBV"/>
</dbReference>
<dbReference type="Pfam" id="PF08290">
    <property type="entry name" value="Hep_core_N"/>
    <property type="match status" value="1"/>
</dbReference>
<dbReference type="Pfam" id="PF00906">
    <property type="entry name" value="Hepatitis_core"/>
    <property type="match status" value="3"/>
</dbReference>
<dbReference type="SUPFAM" id="SSF47852">
    <property type="entry name" value="Hepatitis B viral capsid (hbcag)"/>
    <property type="match status" value="1"/>
</dbReference>
<organismHost>
    <name type="scientific">Homo sapiens</name>
    <name type="common">Human</name>
    <dbReference type="NCBI Taxonomy" id="9606"/>
</organismHost>
<organismHost>
    <name type="scientific">Pan troglodytes</name>
    <name type="common">Chimpanzee</name>
    <dbReference type="NCBI Taxonomy" id="9598"/>
</organismHost>
<protein>
    <recommendedName>
        <fullName evidence="2">External core antigen</fullName>
    </recommendedName>
    <alternativeName>
        <fullName evidence="2">HBeAg</fullName>
    </alternativeName>
    <alternativeName>
        <fullName evidence="2">Precore protein</fullName>
    </alternativeName>
    <alternativeName>
        <fullName evidence="2">p25</fullName>
    </alternativeName>
</protein>
<name>HBEAG_HBVC3</name>
<gene>
    <name evidence="2" type="primary">C</name>
</gene>
<comment type="function">
    <text evidence="2">May regulate immune response to the intracellular capsid in acting as a T-cell tolerogen, by having an immunoregulatory effect which prevents destruction of infected cells by cytotoxic T-cells. This immune regulation may predispose to chronicity during perinatal infections and prevent severe liver injury during adult infections.</text>
</comment>
<comment type="subunit">
    <text evidence="2">Homodimerizes.</text>
</comment>
<comment type="subcellular location">
    <subcellularLocation>
        <location evidence="2">Secreted</location>
    </subcellularLocation>
    <subcellularLocation>
        <location evidence="2">Host nucleus</location>
    </subcellularLocation>
</comment>
<comment type="alternative products">
    <event type="alternative initiation"/>
    <isoform>
        <id>P0C6H5-1</id>
        <name>External core antigen</name>
        <sequence type="displayed"/>
    </isoform>
    <isoform>
        <id>P69706-1</id>
        <name>Capsid protein</name>
        <sequence type="external"/>
    </isoform>
</comment>
<comment type="PTM">
    <text evidence="2">Phosphorylated.</text>
</comment>
<comment type="PTM">
    <text evidence="2">Cleaved by host furin.</text>
</comment>
<comment type="similarity">
    <text evidence="2">Belongs to the orthohepadnavirus precore antigen family.</text>
</comment>
<organism>
    <name type="scientific">Hepatitis B virus genotype C subtype adr (strain Japan/adr4/1983)</name>
    <name type="common">HBV-C</name>
    <dbReference type="NCBI Taxonomy" id="10409"/>
    <lineage>
        <taxon>Viruses</taxon>
        <taxon>Riboviria</taxon>
        <taxon>Pararnavirae</taxon>
        <taxon>Artverviricota</taxon>
        <taxon>Revtraviricetes</taxon>
        <taxon>Blubervirales</taxon>
        <taxon>Hepadnaviridae</taxon>
        <taxon>Orthohepadnavirus</taxon>
        <taxon>Hepatitis B virus</taxon>
    </lineage>
</organism>